<sequence length="160" mass="18314">MAKQKKHPTGTIAQNKKARHDYFIEHKFEAGLVLAGWEVKSLRASKLQLVDSYVLLKDGEAWLLGSHITPLMTASTHVIADPVRTRKLLLNRRELDKLAAAVQQKGYACVCLSWYWSKHMVKCEIALGKGKKEYDKRDTERERDAGRELQRAVRNKGKED</sequence>
<name>SSRP_PSEPF</name>
<feature type="chain" id="PRO_1000002115" description="SsrA-binding protein">
    <location>
        <begin position="1"/>
        <end position="160"/>
    </location>
</feature>
<feature type="region of interest" description="Disordered" evidence="2">
    <location>
        <begin position="131"/>
        <end position="160"/>
    </location>
</feature>
<reference key="1">
    <citation type="journal article" date="2009" name="Genome Biol.">
        <title>Genomic and genetic analyses of diversity and plant interactions of Pseudomonas fluorescens.</title>
        <authorList>
            <person name="Silby M.W."/>
            <person name="Cerdeno-Tarraga A.M."/>
            <person name="Vernikos G.S."/>
            <person name="Giddens S.R."/>
            <person name="Jackson R.W."/>
            <person name="Preston G.M."/>
            <person name="Zhang X.-X."/>
            <person name="Moon C.D."/>
            <person name="Gehrig S.M."/>
            <person name="Godfrey S.A.C."/>
            <person name="Knight C.G."/>
            <person name="Malone J.G."/>
            <person name="Robinson Z."/>
            <person name="Spiers A.J."/>
            <person name="Harris S."/>
            <person name="Challis G.L."/>
            <person name="Yaxley A.M."/>
            <person name="Harris D."/>
            <person name="Seeger K."/>
            <person name="Murphy L."/>
            <person name="Rutter S."/>
            <person name="Squares R."/>
            <person name="Quail M.A."/>
            <person name="Saunders E."/>
            <person name="Mavromatis K."/>
            <person name="Brettin T.S."/>
            <person name="Bentley S.D."/>
            <person name="Hothersall J."/>
            <person name="Stephens E."/>
            <person name="Thomas C.M."/>
            <person name="Parkhill J."/>
            <person name="Levy S.B."/>
            <person name="Rainey P.B."/>
            <person name="Thomson N.R."/>
        </authorList>
    </citation>
    <scope>NUCLEOTIDE SEQUENCE [LARGE SCALE GENOMIC DNA]</scope>
    <source>
        <strain>Pf0-1</strain>
    </source>
</reference>
<evidence type="ECO:0000255" key="1">
    <source>
        <dbReference type="HAMAP-Rule" id="MF_00023"/>
    </source>
</evidence>
<evidence type="ECO:0000256" key="2">
    <source>
        <dbReference type="SAM" id="MobiDB-lite"/>
    </source>
</evidence>
<gene>
    <name evidence="1" type="primary">smpB</name>
    <name type="ordered locus">Pfl01_0755</name>
</gene>
<comment type="function">
    <text evidence="1">Required for rescue of stalled ribosomes mediated by trans-translation. Binds to transfer-messenger RNA (tmRNA), required for stable association of tmRNA with ribosomes. tmRNA and SmpB together mimic tRNA shape, replacing the anticodon stem-loop with SmpB. tmRNA is encoded by the ssrA gene; the 2 termini fold to resemble tRNA(Ala) and it encodes a 'tag peptide', a short internal open reading frame. During trans-translation Ala-aminoacylated tmRNA acts like a tRNA, entering the A-site of stalled ribosomes, displacing the stalled mRNA. The ribosome then switches to translate the ORF on the tmRNA; the nascent peptide is terminated with the 'tag peptide' encoded by the tmRNA and targeted for degradation. The ribosome is freed to recommence translation, which seems to be the essential function of trans-translation.</text>
</comment>
<comment type="subcellular location">
    <subcellularLocation>
        <location evidence="1">Cytoplasm</location>
    </subcellularLocation>
    <text evidence="1">The tmRNA-SmpB complex associates with stalled 70S ribosomes.</text>
</comment>
<comment type="similarity">
    <text evidence="1">Belongs to the SmpB family.</text>
</comment>
<protein>
    <recommendedName>
        <fullName evidence="1">SsrA-binding protein</fullName>
    </recommendedName>
    <alternativeName>
        <fullName evidence="1">Small protein B</fullName>
    </alternativeName>
</protein>
<accession>Q3KIA8</accession>
<proteinExistence type="inferred from homology"/>
<dbReference type="EMBL" id="CP000094">
    <property type="protein sequence ID" value="ABA72498.1"/>
    <property type="molecule type" value="Genomic_DNA"/>
</dbReference>
<dbReference type="RefSeq" id="WP_007953781.1">
    <property type="nucleotide sequence ID" value="NC_007492.2"/>
</dbReference>
<dbReference type="SMR" id="Q3KIA8"/>
<dbReference type="GeneID" id="89624107"/>
<dbReference type="KEGG" id="pfo:Pfl01_0755"/>
<dbReference type="eggNOG" id="COG0691">
    <property type="taxonomic scope" value="Bacteria"/>
</dbReference>
<dbReference type="HOGENOM" id="CLU_108953_3_0_6"/>
<dbReference type="Proteomes" id="UP000002704">
    <property type="component" value="Chromosome"/>
</dbReference>
<dbReference type="GO" id="GO:0005829">
    <property type="term" value="C:cytosol"/>
    <property type="evidence" value="ECO:0007669"/>
    <property type="project" value="TreeGrafter"/>
</dbReference>
<dbReference type="GO" id="GO:0003723">
    <property type="term" value="F:RNA binding"/>
    <property type="evidence" value="ECO:0007669"/>
    <property type="project" value="UniProtKB-UniRule"/>
</dbReference>
<dbReference type="GO" id="GO:0070929">
    <property type="term" value="P:trans-translation"/>
    <property type="evidence" value="ECO:0007669"/>
    <property type="project" value="UniProtKB-UniRule"/>
</dbReference>
<dbReference type="CDD" id="cd09294">
    <property type="entry name" value="SmpB"/>
    <property type="match status" value="1"/>
</dbReference>
<dbReference type="Gene3D" id="2.40.280.10">
    <property type="match status" value="1"/>
</dbReference>
<dbReference type="HAMAP" id="MF_00023">
    <property type="entry name" value="SmpB"/>
    <property type="match status" value="1"/>
</dbReference>
<dbReference type="InterPro" id="IPR023620">
    <property type="entry name" value="SmpB"/>
</dbReference>
<dbReference type="InterPro" id="IPR000037">
    <property type="entry name" value="SsrA-bd_prot"/>
</dbReference>
<dbReference type="InterPro" id="IPR020081">
    <property type="entry name" value="SsrA-bd_prot_CS"/>
</dbReference>
<dbReference type="NCBIfam" id="NF003843">
    <property type="entry name" value="PRK05422.1"/>
    <property type="match status" value="1"/>
</dbReference>
<dbReference type="NCBIfam" id="TIGR00086">
    <property type="entry name" value="smpB"/>
    <property type="match status" value="1"/>
</dbReference>
<dbReference type="PANTHER" id="PTHR30308:SF2">
    <property type="entry name" value="SSRA-BINDING PROTEIN"/>
    <property type="match status" value="1"/>
</dbReference>
<dbReference type="PANTHER" id="PTHR30308">
    <property type="entry name" value="TMRNA-BINDING COMPONENT OF TRANS-TRANSLATION TAGGING COMPLEX"/>
    <property type="match status" value="1"/>
</dbReference>
<dbReference type="Pfam" id="PF01668">
    <property type="entry name" value="SmpB"/>
    <property type="match status" value="1"/>
</dbReference>
<dbReference type="SUPFAM" id="SSF74982">
    <property type="entry name" value="Small protein B (SmpB)"/>
    <property type="match status" value="1"/>
</dbReference>
<dbReference type="PROSITE" id="PS01317">
    <property type="entry name" value="SSRP"/>
    <property type="match status" value="1"/>
</dbReference>
<keyword id="KW-0963">Cytoplasm</keyword>
<keyword id="KW-0694">RNA-binding</keyword>
<organism>
    <name type="scientific">Pseudomonas fluorescens (strain Pf0-1)</name>
    <dbReference type="NCBI Taxonomy" id="205922"/>
    <lineage>
        <taxon>Bacteria</taxon>
        <taxon>Pseudomonadati</taxon>
        <taxon>Pseudomonadota</taxon>
        <taxon>Gammaproteobacteria</taxon>
        <taxon>Pseudomonadales</taxon>
        <taxon>Pseudomonadaceae</taxon>
        <taxon>Pseudomonas</taxon>
    </lineage>
</organism>